<sequence>MASIHADVTLVGGGIMSATLAMLIHRLDPALHICMIEQLPDIALESSGALNNAGTGHAGYCELNYTPHDKDGNVLIQRALEINAAFEVSLQFWSHLVNADRENITPSSFINRVPHLSAVWGQKDIDFLKARYTLLKSHHLFSEMKWSEDEQTLADWMPLMMKGRQAEPKLAATRVEHGADVNFGALTRILVSYLQKNANFELLTNTRVVDLHRAHGAKKPWAVKVKNQNSAAKQTIESPFVFLGAGGVALHLLQNSGIEEAAGYGGFPVSGQWLICQNQDLIRQHHAKVYSLAAVGAPPMSVPHLDTRIINGKPSLLFGPYAGFTTKFLKHGSPFDLAKSVRPHNLKSLIGAGKNNFDLTKYLVKEVFQTHSQRMQSLEAFIPNARAEDWQLAHAGKRVQIIKRCHHKWGKLEFGTEIVAAEDGSLAALLGASPGASVSVKTMLDVLERCFPQQMQSAEWQDKLKTMIPSYGRSLINDANLSASVRRYTLDTLKLSS</sequence>
<feature type="chain" id="PRO_1000204204" description="Probable malate:quinone oxidoreductase">
    <location>
        <begin position="1"/>
        <end position="497"/>
    </location>
</feature>
<name>MQO_TOLAT</name>
<gene>
    <name evidence="1" type="primary">mqo</name>
    <name type="ordered locus">Tola_1513</name>
</gene>
<protein>
    <recommendedName>
        <fullName evidence="1">Probable malate:quinone oxidoreductase</fullName>
        <ecNumber evidence="1">1.1.5.4</ecNumber>
    </recommendedName>
    <alternativeName>
        <fullName evidence="1">MQO</fullName>
    </alternativeName>
    <alternativeName>
        <fullName evidence="1">Malate dehydrogenase [quinone]</fullName>
    </alternativeName>
</protein>
<reference key="1">
    <citation type="submission" date="2009-05" db="EMBL/GenBank/DDBJ databases">
        <title>Complete sequence of Tolumonas auensis DSM 9187.</title>
        <authorList>
            <consortium name="US DOE Joint Genome Institute"/>
            <person name="Lucas S."/>
            <person name="Copeland A."/>
            <person name="Lapidus A."/>
            <person name="Glavina del Rio T."/>
            <person name="Tice H."/>
            <person name="Bruce D."/>
            <person name="Goodwin L."/>
            <person name="Pitluck S."/>
            <person name="Chertkov O."/>
            <person name="Brettin T."/>
            <person name="Detter J.C."/>
            <person name="Han C."/>
            <person name="Larimer F."/>
            <person name="Land M."/>
            <person name="Hauser L."/>
            <person name="Kyrpides N."/>
            <person name="Mikhailova N."/>
            <person name="Spring S."/>
            <person name="Beller H."/>
        </authorList>
    </citation>
    <scope>NUCLEOTIDE SEQUENCE [LARGE SCALE GENOMIC DNA]</scope>
    <source>
        <strain>DSM 9187 / NBRC 110442 / TA 4</strain>
    </source>
</reference>
<accession>C4LEV7</accession>
<organism>
    <name type="scientific">Tolumonas auensis (strain DSM 9187 / NBRC 110442 / TA 4)</name>
    <dbReference type="NCBI Taxonomy" id="595494"/>
    <lineage>
        <taxon>Bacteria</taxon>
        <taxon>Pseudomonadati</taxon>
        <taxon>Pseudomonadota</taxon>
        <taxon>Gammaproteobacteria</taxon>
        <taxon>Aeromonadales</taxon>
        <taxon>Aeromonadaceae</taxon>
        <taxon>Tolumonas</taxon>
    </lineage>
</organism>
<proteinExistence type="inferred from homology"/>
<comment type="catalytic activity">
    <reaction evidence="1">
        <text>(S)-malate + a quinone = a quinol + oxaloacetate</text>
        <dbReference type="Rhea" id="RHEA:46012"/>
        <dbReference type="ChEBI" id="CHEBI:15589"/>
        <dbReference type="ChEBI" id="CHEBI:16452"/>
        <dbReference type="ChEBI" id="CHEBI:24646"/>
        <dbReference type="ChEBI" id="CHEBI:132124"/>
        <dbReference type="EC" id="1.1.5.4"/>
    </reaction>
</comment>
<comment type="cofactor">
    <cofactor evidence="1">
        <name>FAD</name>
        <dbReference type="ChEBI" id="CHEBI:57692"/>
    </cofactor>
</comment>
<comment type="pathway">
    <text evidence="1">Carbohydrate metabolism; tricarboxylic acid cycle; oxaloacetate from (S)-malate (quinone route): step 1/1.</text>
</comment>
<comment type="similarity">
    <text evidence="1">Belongs to the MQO family.</text>
</comment>
<keyword id="KW-0274">FAD</keyword>
<keyword id="KW-0285">Flavoprotein</keyword>
<keyword id="KW-0560">Oxidoreductase</keyword>
<keyword id="KW-1185">Reference proteome</keyword>
<keyword id="KW-0816">Tricarboxylic acid cycle</keyword>
<dbReference type="EC" id="1.1.5.4" evidence="1"/>
<dbReference type="EMBL" id="CP001616">
    <property type="protein sequence ID" value="ACQ93124.1"/>
    <property type="molecule type" value="Genomic_DNA"/>
</dbReference>
<dbReference type="RefSeq" id="WP_015878596.1">
    <property type="nucleotide sequence ID" value="NC_012691.1"/>
</dbReference>
<dbReference type="SMR" id="C4LEV7"/>
<dbReference type="STRING" id="595494.Tola_1513"/>
<dbReference type="KEGG" id="tau:Tola_1513"/>
<dbReference type="eggNOG" id="COG0579">
    <property type="taxonomic scope" value="Bacteria"/>
</dbReference>
<dbReference type="HOGENOM" id="CLU_028151_0_0_6"/>
<dbReference type="OrthoDB" id="9763983at2"/>
<dbReference type="UniPathway" id="UPA00223">
    <property type="reaction ID" value="UER01008"/>
</dbReference>
<dbReference type="Proteomes" id="UP000009073">
    <property type="component" value="Chromosome"/>
</dbReference>
<dbReference type="GO" id="GO:0047545">
    <property type="term" value="F:2-hydroxyglutarate dehydrogenase activity"/>
    <property type="evidence" value="ECO:0007669"/>
    <property type="project" value="TreeGrafter"/>
</dbReference>
<dbReference type="GO" id="GO:0008924">
    <property type="term" value="F:L-malate dehydrogenase (quinone) activity"/>
    <property type="evidence" value="ECO:0007669"/>
    <property type="project" value="UniProtKB-UniRule"/>
</dbReference>
<dbReference type="GO" id="GO:0006099">
    <property type="term" value="P:tricarboxylic acid cycle"/>
    <property type="evidence" value="ECO:0007669"/>
    <property type="project" value="UniProtKB-UniRule"/>
</dbReference>
<dbReference type="Gene3D" id="3.30.9.10">
    <property type="entry name" value="D-Amino Acid Oxidase, subunit A, domain 2"/>
    <property type="match status" value="1"/>
</dbReference>
<dbReference type="Gene3D" id="3.50.50.60">
    <property type="entry name" value="FAD/NAD(P)-binding domain"/>
    <property type="match status" value="1"/>
</dbReference>
<dbReference type="HAMAP" id="MF_00212">
    <property type="entry name" value="MQO"/>
    <property type="match status" value="1"/>
</dbReference>
<dbReference type="InterPro" id="IPR036188">
    <property type="entry name" value="FAD/NAD-bd_sf"/>
</dbReference>
<dbReference type="InterPro" id="IPR006231">
    <property type="entry name" value="MQO"/>
</dbReference>
<dbReference type="NCBIfam" id="TIGR01320">
    <property type="entry name" value="mal_quin_oxido"/>
    <property type="match status" value="1"/>
</dbReference>
<dbReference type="NCBIfam" id="NF003603">
    <property type="entry name" value="PRK05257.1-1"/>
    <property type="match status" value="1"/>
</dbReference>
<dbReference type="NCBIfam" id="NF003606">
    <property type="entry name" value="PRK05257.2-1"/>
    <property type="match status" value="1"/>
</dbReference>
<dbReference type="NCBIfam" id="NF003611">
    <property type="entry name" value="PRK05257.3-2"/>
    <property type="match status" value="1"/>
</dbReference>
<dbReference type="NCBIfam" id="NF003613">
    <property type="entry name" value="PRK05257.3-4"/>
    <property type="match status" value="1"/>
</dbReference>
<dbReference type="NCBIfam" id="NF009875">
    <property type="entry name" value="PRK13339.1"/>
    <property type="match status" value="1"/>
</dbReference>
<dbReference type="PANTHER" id="PTHR43104">
    <property type="entry name" value="L-2-HYDROXYGLUTARATE DEHYDROGENASE, MITOCHONDRIAL"/>
    <property type="match status" value="1"/>
</dbReference>
<dbReference type="PANTHER" id="PTHR43104:SF2">
    <property type="entry name" value="L-2-HYDROXYGLUTARATE DEHYDROGENASE, MITOCHONDRIAL"/>
    <property type="match status" value="1"/>
</dbReference>
<dbReference type="Pfam" id="PF06039">
    <property type="entry name" value="Mqo"/>
    <property type="match status" value="1"/>
</dbReference>
<dbReference type="SUPFAM" id="SSF51905">
    <property type="entry name" value="FAD/NAD(P)-binding domain"/>
    <property type="match status" value="1"/>
</dbReference>
<evidence type="ECO:0000255" key="1">
    <source>
        <dbReference type="HAMAP-Rule" id="MF_00212"/>
    </source>
</evidence>